<accession>P21888</accession>
<accession>Q2MBQ3</accession>
<proteinExistence type="evidence at protein level"/>
<dbReference type="EC" id="6.1.1.16"/>
<dbReference type="EMBL" id="X56234">
    <property type="protein sequence ID" value="CAA39691.1"/>
    <property type="molecule type" value="Genomic_DNA"/>
</dbReference>
<dbReference type="EMBL" id="M59381">
    <property type="protein sequence ID" value="AAA23658.1"/>
    <property type="molecule type" value="Genomic_DNA"/>
</dbReference>
<dbReference type="EMBL" id="X59293">
    <property type="protein sequence ID" value="CAA41983.1"/>
    <property type="molecule type" value="Genomic_DNA"/>
</dbReference>
<dbReference type="EMBL" id="U82664">
    <property type="protein sequence ID" value="AAB40279.1"/>
    <property type="molecule type" value="Genomic_DNA"/>
</dbReference>
<dbReference type="EMBL" id="U00096">
    <property type="protein sequence ID" value="AAC73628.1"/>
    <property type="molecule type" value="Genomic_DNA"/>
</dbReference>
<dbReference type="EMBL" id="AP009048">
    <property type="protein sequence ID" value="BAE76303.1"/>
    <property type="molecule type" value="Genomic_DNA"/>
</dbReference>
<dbReference type="PIR" id="A37868">
    <property type="entry name" value="YYEC"/>
</dbReference>
<dbReference type="RefSeq" id="NP_415059.1">
    <property type="nucleotide sequence ID" value="NC_000913.3"/>
</dbReference>
<dbReference type="RefSeq" id="WP_000912385.1">
    <property type="nucleotide sequence ID" value="NZ_SSZK01000024.1"/>
</dbReference>
<dbReference type="PDB" id="1LI5">
    <property type="method" value="X-ray"/>
    <property type="resolution" value="2.30 A"/>
    <property type="chains" value="A/B=1-461"/>
</dbReference>
<dbReference type="PDB" id="1LI7">
    <property type="method" value="X-ray"/>
    <property type="resolution" value="2.60 A"/>
    <property type="chains" value="A/B=1-461"/>
</dbReference>
<dbReference type="PDB" id="1U0B">
    <property type="method" value="X-ray"/>
    <property type="resolution" value="2.30 A"/>
    <property type="chains" value="B=1-461"/>
</dbReference>
<dbReference type="PDBsum" id="1LI5"/>
<dbReference type="PDBsum" id="1LI7"/>
<dbReference type="PDBsum" id="1U0B"/>
<dbReference type="SMR" id="P21888"/>
<dbReference type="BioGRID" id="4262015">
    <property type="interactions" value="54"/>
</dbReference>
<dbReference type="FunCoup" id="P21888">
    <property type="interactions" value="740"/>
</dbReference>
<dbReference type="IntAct" id="P21888">
    <property type="interactions" value="3"/>
</dbReference>
<dbReference type="STRING" id="511145.b0526"/>
<dbReference type="jPOST" id="P21888"/>
<dbReference type="PaxDb" id="511145-b0526"/>
<dbReference type="EnsemblBacteria" id="AAC73628">
    <property type="protein sequence ID" value="AAC73628"/>
    <property type="gene ID" value="b0526"/>
</dbReference>
<dbReference type="GeneID" id="946969"/>
<dbReference type="KEGG" id="ecj:JW0515"/>
<dbReference type="KEGG" id="eco:b0526"/>
<dbReference type="KEGG" id="ecoc:C3026_02580"/>
<dbReference type="PATRIC" id="fig|1411691.4.peg.1752"/>
<dbReference type="EchoBASE" id="EB0193"/>
<dbReference type="eggNOG" id="COG0215">
    <property type="taxonomic scope" value="Bacteria"/>
</dbReference>
<dbReference type="HOGENOM" id="CLU_013528_0_1_6"/>
<dbReference type="InParanoid" id="P21888"/>
<dbReference type="OMA" id="IMRWPSP"/>
<dbReference type="OrthoDB" id="9815130at2"/>
<dbReference type="PhylomeDB" id="P21888"/>
<dbReference type="BioCyc" id="EcoCyc:CYSS-MONOMER"/>
<dbReference type="BioCyc" id="MetaCyc:CYSS-MONOMER"/>
<dbReference type="BRENDA" id="6.1.1.16">
    <property type="organism ID" value="2026"/>
</dbReference>
<dbReference type="SABIO-RK" id="P21888"/>
<dbReference type="EvolutionaryTrace" id="P21888"/>
<dbReference type="PRO" id="PR:P21888"/>
<dbReference type="Proteomes" id="UP000000625">
    <property type="component" value="Chromosome"/>
</dbReference>
<dbReference type="GO" id="GO:0005737">
    <property type="term" value="C:cytoplasm"/>
    <property type="evidence" value="ECO:0000318"/>
    <property type="project" value="GO_Central"/>
</dbReference>
<dbReference type="GO" id="GO:0005829">
    <property type="term" value="C:cytosol"/>
    <property type="evidence" value="ECO:0000314"/>
    <property type="project" value="EcoCyc"/>
</dbReference>
<dbReference type="GO" id="GO:0004812">
    <property type="term" value="F:aminoacyl-tRNA ligase activity"/>
    <property type="evidence" value="ECO:0000314"/>
    <property type="project" value="EcoliWiki"/>
</dbReference>
<dbReference type="GO" id="GO:0005524">
    <property type="term" value="F:ATP binding"/>
    <property type="evidence" value="ECO:0000353"/>
    <property type="project" value="EcoliWiki"/>
</dbReference>
<dbReference type="GO" id="GO:0004817">
    <property type="term" value="F:cysteine-tRNA ligase activity"/>
    <property type="evidence" value="ECO:0000314"/>
    <property type="project" value="EcoliWiki"/>
</dbReference>
<dbReference type="GO" id="GO:0016874">
    <property type="term" value="F:ligase activity"/>
    <property type="evidence" value="ECO:0000314"/>
    <property type="project" value="EcoliWiki"/>
</dbReference>
<dbReference type="GO" id="GO:0046872">
    <property type="term" value="F:metal ion binding"/>
    <property type="evidence" value="ECO:0000353"/>
    <property type="project" value="EcoliWiki"/>
</dbReference>
<dbReference type="GO" id="GO:0008270">
    <property type="term" value="F:zinc ion binding"/>
    <property type="evidence" value="ECO:0000314"/>
    <property type="project" value="EcoCyc"/>
</dbReference>
<dbReference type="GO" id="GO:0006423">
    <property type="term" value="P:cysteinyl-tRNA aminoacylation"/>
    <property type="evidence" value="ECO:0000314"/>
    <property type="project" value="EcoliWiki"/>
</dbReference>
<dbReference type="CDD" id="cd07963">
    <property type="entry name" value="Anticodon_Ia_Cys"/>
    <property type="match status" value="1"/>
</dbReference>
<dbReference type="CDD" id="cd00672">
    <property type="entry name" value="CysRS_core"/>
    <property type="match status" value="1"/>
</dbReference>
<dbReference type="FunFam" id="1.20.120.1910:FF:000001">
    <property type="entry name" value="Cysteine--tRNA ligase"/>
    <property type="match status" value="1"/>
</dbReference>
<dbReference type="FunFam" id="3.40.50.620:FF:000009">
    <property type="entry name" value="Cysteine--tRNA ligase"/>
    <property type="match status" value="1"/>
</dbReference>
<dbReference type="Gene3D" id="1.20.120.1910">
    <property type="entry name" value="Cysteine-tRNA ligase, C-terminal anti-codon recognition domain"/>
    <property type="match status" value="1"/>
</dbReference>
<dbReference type="Gene3D" id="3.40.50.620">
    <property type="entry name" value="HUPs"/>
    <property type="match status" value="1"/>
</dbReference>
<dbReference type="HAMAP" id="MF_00041">
    <property type="entry name" value="Cys_tRNA_synth"/>
    <property type="match status" value="1"/>
</dbReference>
<dbReference type="InterPro" id="IPR015803">
    <property type="entry name" value="Cys-tRNA-ligase"/>
</dbReference>
<dbReference type="InterPro" id="IPR015273">
    <property type="entry name" value="Cys-tRNA-synt_Ia_DALR"/>
</dbReference>
<dbReference type="InterPro" id="IPR024909">
    <property type="entry name" value="Cys-tRNA/MSH_ligase"/>
</dbReference>
<dbReference type="InterPro" id="IPR056411">
    <property type="entry name" value="CysS_C"/>
</dbReference>
<dbReference type="InterPro" id="IPR014729">
    <property type="entry name" value="Rossmann-like_a/b/a_fold"/>
</dbReference>
<dbReference type="InterPro" id="IPR032678">
    <property type="entry name" value="tRNA-synt_1_cat_dom"/>
</dbReference>
<dbReference type="InterPro" id="IPR009080">
    <property type="entry name" value="tRNAsynth_Ia_anticodon-bd"/>
</dbReference>
<dbReference type="NCBIfam" id="TIGR00435">
    <property type="entry name" value="cysS"/>
    <property type="match status" value="1"/>
</dbReference>
<dbReference type="PANTHER" id="PTHR10890:SF3">
    <property type="entry name" value="CYSTEINE--TRNA LIGASE, CYTOPLASMIC"/>
    <property type="match status" value="1"/>
</dbReference>
<dbReference type="PANTHER" id="PTHR10890">
    <property type="entry name" value="CYSTEINYL-TRNA SYNTHETASE"/>
    <property type="match status" value="1"/>
</dbReference>
<dbReference type="Pfam" id="PF23493">
    <property type="entry name" value="CysS_C"/>
    <property type="match status" value="1"/>
</dbReference>
<dbReference type="Pfam" id="PF09190">
    <property type="entry name" value="DALR_2"/>
    <property type="match status" value="1"/>
</dbReference>
<dbReference type="Pfam" id="PF01406">
    <property type="entry name" value="tRNA-synt_1e"/>
    <property type="match status" value="1"/>
</dbReference>
<dbReference type="PRINTS" id="PR00983">
    <property type="entry name" value="TRNASYNTHCYS"/>
</dbReference>
<dbReference type="SMART" id="SM00840">
    <property type="entry name" value="DALR_2"/>
    <property type="match status" value="1"/>
</dbReference>
<dbReference type="SUPFAM" id="SSF47323">
    <property type="entry name" value="Anticodon-binding domain of a subclass of class I aminoacyl-tRNA synthetases"/>
    <property type="match status" value="1"/>
</dbReference>
<dbReference type="SUPFAM" id="SSF52374">
    <property type="entry name" value="Nucleotidylyl transferase"/>
    <property type="match status" value="1"/>
</dbReference>
<protein>
    <recommendedName>
        <fullName>Cysteine--tRNA ligase</fullName>
        <ecNumber>6.1.1.16</ecNumber>
    </recommendedName>
    <alternativeName>
        <fullName>Cysteinyl-tRNA synthetase</fullName>
        <shortName>CysRS</shortName>
    </alternativeName>
</protein>
<name>SYC_ECOLI</name>
<comment type="function">
    <text evidence="3">Catalyzes the ATP-dependent ligation of cysteine to tRNA(Cys) (PubMed:12662918). Unable to bind serine (PubMed:12662918).</text>
</comment>
<comment type="function">
    <text evidence="5">In addition to its role as an aminoacyl-tRNA synthetase, has also cysteine persulfide synthase activity. Produces reactive persulfide species such as cysteine persulfide (CysSSH) from substrate cysteine and mediate direct incorporation of CysSSH into proteins during translations, resulting in protein persulfides and polysulfides (PubMed:29079736). CysSSHs behave as potent antioxidants and cellular protectants (PubMed:29079736).</text>
</comment>
<comment type="catalytic activity">
    <reaction evidence="3">
        <text>tRNA(Cys) + L-cysteine + ATP = L-cysteinyl-tRNA(Cys) + AMP + diphosphate</text>
        <dbReference type="Rhea" id="RHEA:17773"/>
        <dbReference type="Rhea" id="RHEA-COMP:9661"/>
        <dbReference type="Rhea" id="RHEA-COMP:9679"/>
        <dbReference type="ChEBI" id="CHEBI:30616"/>
        <dbReference type="ChEBI" id="CHEBI:33019"/>
        <dbReference type="ChEBI" id="CHEBI:35235"/>
        <dbReference type="ChEBI" id="CHEBI:78442"/>
        <dbReference type="ChEBI" id="CHEBI:78517"/>
        <dbReference type="ChEBI" id="CHEBI:456215"/>
        <dbReference type="EC" id="6.1.1.16"/>
    </reaction>
    <physiologicalReaction direction="left-to-right" evidence="7">
        <dbReference type="Rhea" id="RHEA:17774"/>
    </physiologicalReaction>
</comment>
<comment type="cofactor">
    <cofactor evidence="2 3 4">
        <name>Zn(2+)</name>
        <dbReference type="ChEBI" id="CHEBI:29105"/>
    </cofactor>
    <text evidence="2 4">Binds 1 zinc ion per subunit.</text>
</comment>
<comment type="biophysicochemical properties">
    <kinetics>
        <KM evidence="3">22 uM for L-cysteine</KM>
        <KM evidence="3">0.35 uM for tRNA(Cys)</KM>
        <KM evidence="3">290 uM for ATP</KM>
        <text>kcat is 79 sec(-1) with cysteine as substrate. kcat is 91 sec(-1) with ATP as substrate. kcat is 0.9 sec(-1) with tRNA(Cys) as substrate.</text>
    </kinetics>
</comment>
<comment type="subunit">
    <text evidence="2">Monomer.</text>
</comment>
<comment type="subcellular location">
    <subcellularLocation>
        <location>Cytoplasm</location>
    </subcellularLocation>
</comment>
<comment type="domain">
    <text evidence="5">'KIIK' region and 'KMSKS' region are required for cysteine persulfide synthase activity.</text>
</comment>
<comment type="similarity">
    <text evidence="6">Belongs to the class-I aminoacyl-tRNA synthetase family.</text>
</comment>
<evidence type="ECO:0000250" key="1"/>
<evidence type="ECO:0000269" key="2">
    <source>
    </source>
</evidence>
<evidence type="ECO:0000269" key="3">
    <source>
    </source>
</evidence>
<evidence type="ECO:0000269" key="4">
    <source>
    </source>
</evidence>
<evidence type="ECO:0000269" key="5">
    <source>
    </source>
</evidence>
<evidence type="ECO:0000305" key="6"/>
<evidence type="ECO:0000305" key="7">
    <source>
    </source>
</evidence>
<evidence type="ECO:0007744" key="8">
    <source>
        <dbReference type="PDB" id="1LI5"/>
    </source>
</evidence>
<evidence type="ECO:0007744" key="9">
    <source>
        <dbReference type="PDB" id="1LI7"/>
    </source>
</evidence>
<evidence type="ECO:0007744" key="10">
    <source>
        <dbReference type="PDB" id="1U0B"/>
    </source>
</evidence>
<evidence type="ECO:0007829" key="11">
    <source>
        <dbReference type="PDB" id="1LI5"/>
    </source>
</evidence>
<evidence type="ECO:0007829" key="12">
    <source>
        <dbReference type="PDB" id="1U0B"/>
    </source>
</evidence>
<feature type="chain" id="PRO_0000159394" description="Cysteine--tRNA ligase">
    <location>
        <begin position="1"/>
        <end position="461"/>
    </location>
</feature>
<feature type="short sequence motif" description="'HIGH' region">
    <location>
        <begin position="30"/>
        <end position="40"/>
    </location>
</feature>
<feature type="short sequence motif" description="'KIIK' region">
    <location>
        <begin position="73"/>
        <end position="76"/>
    </location>
</feature>
<feature type="short sequence motif" description="'KMSKS' region">
    <location>
        <begin position="266"/>
        <end position="270"/>
    </location>
</feature>
<feature type="binding site" evidence="2 4 8 9 10">
    <location>
        <position position="28"/>
    </location>
    <ligand>
        <name>Zn(2+)</name>
        <dbReference type="ChEBI" id="CHEBI:29105"/>
    </ligand>
</feature>
<feature type="binding site" evidence="2 9">
    <location>
        <position position="29"/>
    </location>
    <ligand>
        <name>L-cysteine</name>
        <dbReference type="ChEBI" id="CHEBI:35235"/>
    </ligand>
</feature>
<feature type="binding site" evidence="2 9">
    <location>
        <position position="68"/>
    </location>
    <ligand>
        <name>L-cysteine</name>
        <dbReference type="ChEBI" id="CHEBI:35235"/>
    </ligand>
</feature>
<feature type="binding site" evidence="2 4 8 9 10">
    <location>
        <position position="209"/>
    </location>
    <ligand>
        <name>Zn(2+)</name>
        <dbReference type="ChEBI" id="CHEBI:29105"/>
    </ligand>
</feature>
<feature type="binding site" evidence="2 9">
    <location>
        <position position="234"/>
    </location>
    <ligand>
        <name>L-cysteine</name>
        <dbReference type="ChEBI" id="CHEBI:35235"/>
    </ligand>
</feature>
<feature type="binding site" evidence="2 4 8 9 10">
    <location>
        <position position="234"/>
    </location>
    <ligand>
        <name>Zn(2+)</name>
        <dbReference type="ChEBI" id="CHEBI:29105"/>
    </ligand>
</feature>
<feature type="binding site" evidence="2 4 8 9 10">
    <location>
        <position position="238"/>
    </location>
    <ligand>
        <name>Zn(2+)</name>
        <dbReference type="ChEBI" id="CHEBI:29105"/>
    </ligand>
</feature>
<feature type="binding site" evidence="1">
    <location>
        <position position="269"/>
    </location>
    <ligand>
        <name>ATP</name>
        <dbReference type="ChEBI" id="CHEBI:30616"/>
    </ligand>
</feature>
<feature type="mutagenesis site" description="No effect on cysteine persulfide synthase activity. Loss of cysteine--tRNA ligase activity; when associated with S-209." evidence="3 5">
    <original>C</original>
    <variation>D</variation>
    <variation>S</variation>
    <location>
        <position position="28"/>
    </location>
</feature>
<feature type="mutagenesis site" description="Strongly decreases cysteine persulfide synthase activity." evidence="5">
    <original>KIIK</original>
    <variation>AIIA</variation>
    <location>
        <begin position="73"/>
        <end position="76"/>
    </location>
</feature>
<feature type="mutagenesis site" description="Strongly decreases cysteine persulfide synthase activity." evidence="5">
    <original>K</original>
    <variation>A</variation>
    <location>
        <position position="73"/>
    </location>
</feature>
<feature type="mutagenesis site" description="Strongly decreases cysteine persulfide synthase activity." evidence="5">
    <original>K</original>
    <variation>A</variation>
    <location>
        <position position="76"/>
    </location>
</feature>
<feature type="mutagenesis site" description="Reduces cysteine binding. Strongly reduces cysteine--tRNA ligase activity." evidence="3">
    <original>W</original>
    <variation>Y</variation>
    <location>
        <position position="205"/>
    </location>
</feature>
<feature type="mutagenesis site" description="No effect on cysteine persulfide synthase; when associated with C-28." evidence="5">
    <original>C</original>
    <variation>D</variation>
    <location>
        <position position="209"/>
    </location>
</feature>
<feature type="mutagenesis site" description="Loss of cysteine--tRNA ligase activity; when associated with S-28." evidence="3">
    <original>C</original>
    <variation>S</variation>
    <location>
        <position position="209"/>
    </location>
</feature>
<feature type="mutagenesis site" description="Strongly decreases cysteine persulfide synthase activity." evidence="5">
    <original>KMSK</original>
    <variation>AMSA</variation>
    <location>
        <begin position="266"/>
        <end position="269"/>
    </location>
</feature>
<feature type="mutagenesis site" description="Strongly decreases cysteine persulfide synthase activity." evidence="5">
    <original>K</original>
    <variation>A</variation>
    <location>
        <position position="266"/>
    </location>
</feature>
<feature type="mutagenesis site" description="Strongly decreases cysteine persulfide synthase activity." evidence="5">
    <original>K</original>
    <variation>A</variation>
    <location>
        <position position="269"/>
    </location>
</feature>
<feature type="sequence conflict" description="In Ref. 1; CAA39691." evidence="6" ref="1">
    <original>L</original>
    <variation>V</variation>
    <location>
        <position position="316"/>
    </location>
</feature>
<feature type="strand" evidence="11">
    <location>
        <begin position="3"/>
        <end position="5"/>
    </location>
</feature>
<feature type="turn" evidence="11">
    <location>
        <begin position="7"/>
        <end position="9"/>
    </location>
</feature>
<feature type="strand" evidence="11">
    <location>
        <begin position="10"/>
        <end position="14"/>
    </location>
</feature>
<feature type="strand" evidence="11">
    <location>
        <begin position="22"/>
        <end position="27"/>
    </location>
</feature>
<feature type="strand" evidence="11">
    <location>
        <begin position="31"/>
        <end position="34"/>
    </location>
</feature>
<feature type="helix" evidence="11">
    <location>
        <begin position="38"/>
        <end position="57"/>
    </location>
</feature>
<feature type="strand" evidence="11">
    <location>
        <begin position="60"/>
        <end position="65"/>
    </location>
</feature>
<feature type="helix" evidence="11">
    <location>
        <begin position="72"/>
        <end position="80"/>
    </location>
</feature>
<feature type="helix" evidence="11">
    <location>
        <begin position="85"/>
        <end position="102"/>
    </location>
</feature>
<feature type="helix" evidence="11">
    <location>
        <begin position="114"/>
        <end position="116"/>
    </location>
</feature>
<feature type="helix" evidence="11">
    <location>
        <begin position="118"/>
        <end position="130"/>
    </location>
</feature>
<feature type="strand" evidence="11">
    <location>
        <begin position="133"/>
        <end position="136"/>
    </location>
</feature>
<feature type="strand" evidence="11">
    <location>
        <begin position="142"/>
        <end position="144"/>
    </location>
</feature>
<feature type="helix" evidence="11">
    <location>
        <begin position="146"/>
        <end position="148"/>
    </location>
</feature>
<feature type="turn" evidence="11">
    <location>
        <begin position="150"/>
        <end position="157"/>
    </location>
</feature>
<feature type="helix" evidence="12">
    <location>
        <begin position="160"/>
        <end position="165"/>
    </location>
</feature>
<feature type="strand" evidence="11">
    <location>
        <begin position="181"/>
        <end position="186"/>
    </location>
</feature>
<feature type="strand" evidence="12">
    <location>
        <begin position="189"/>
        <end position="191"/>
    </location>
</feature>
<feature type="strand" evidence="11">
    <location>
        <begin position="200"/>
        <end position="203"/>
    </location>
</feature>
<feature type="helix" evidence="11">
    <location>
        <begin position="207"/>
        <end position="217"/>
    </location>
</feature>
<feature type="strand" evidence="11">
    <location>
        <begin position="219"/>
        <end position="225"/>
    </location>
</feature>
<feature type="helix" evidence="11">
    <location>
        <begin position="228"/>
        <end position="230"/>
    </location>
</feature>
<feature type="turn" evidence="11">
    <location>
        <begin position="231"/>
        <end position="233"/>
    </location>
</feature>
<feature type="helix" evidence="11">
    <location>
        <begin position="234"/>
        <end position="245"/>
    </location>
</feature>
<feature type="strand" evidence="11">
    <location>
        <begin position="246"/>
        <end position="248"/>
    </location>
</feature>
<feature type="strand" evidence="11">
    <location>
        <begin position="251"/>
        <end position="254"/>
    </location>
</feature>
<feature type="strand" evidence="11">
    <location>
        <begin position="260"/>
        <end position="262"/>
    </location>
</feature>
<feature type="helix" evidence="11">
    <location>
        <begin position="269"/>
        <end position="271"/>
    </location>
</feature>
<feature type="helix" evidence="11">
    <location>
        <begin position="277"/>
        <end position="281"/>
    </location>
</feature>
<feature type="helix" evidence="11">
    <location>
        <begin position="286"/>
        <end position="294"/>
    </location>
</feature>
<feature type="strand" evidence="11">
    <location>
        <begin position="302"/>
        <end position="304"/>
    </location>
</feature>
<feature type="helix" evidence="11">
    <location>
        <begin position="306"/>
        <end position="323"/>
    </location>
</feature>
<feature type="helix" evidence="11">
    <location>
        <begin position="336"/>
        <end position="347"/>
    </location>
</feature>
<feature type="helix" evidence="11">
    <location>
        <begin position="352"/>
        <end position="372"/>
    </location>
</feature>
<feature type="helix" evidence="11">
    <location>
        <begin position="374"/>
        <end position="388"/>
    </location>
</feature>
<feature type="turn" evidence="11">
    <location>
        <begin position="389"/>
        <end position="392"/>
    </location>
</feature>
<feature type="helix" evidence="11">
    <location>
        <begin position="398"/>
        <end position="401"/>
    </location>
</feature>
<feature type="strand" evidence="12">
    <location>
        <begin position="406"/>
        <end position="408"/>
    </location>
</feature>
<feature type="helix" evidence="12">
    <location>
        <begin position="413"/>
        <end position="416"/>
    </location>
</feature>
<feature type="helix" evidence="12">
    <location>
        <begin position="419"/>
        <end position="428"/>
    </location>
</feature>
<feature type="helix" evidence="12">
    <location>
        <begin position="432"/>
        <end position="444"/>
    </location>
</feature>
<feature type="strand" evidence="12">
    <location>
        <begin position="447"/>
        <end position="451"/>
    </location>
</feature>
<feature type="strand" evidence="12">
    <location>
        <begin position="456"/>
        <end position="460"/>
    </location>
</feature>
<reference key="1">
    <citation type="journal article" date="1991" name="Nucleic Acids Res.">
        <title>Cysteinyl-tRNA synthetase: determination of the last E. coli aminoacyl-tRNA synthetase primary structure.</title>
        <authorList>
            <person name="Eriani G."/>
            <person name="Dirheimer G."/>
            <person name="Gangloff J."/>
        </authorList>
    </citation>
    <scope>NUCLEOTIDE SEQUENCE [GENOMIC DNA]</scope>
    <scope>PROTEIN SEQUENCE OF 1-10</scope>
    <source>
        <strain>K12</strain>
    </source>
</reference>
<reference key="2">
    <citation type="journal article" date="1991" name="Proc. Natl. Acad. Sci. U.S.A.">
        <title>Sequence determination and modeling of structural motifs for the smallest monomeric aminoacyl-tRNA synthetase.</title>
        <authorList>
            <person name="Hou Y.M."/>
            <person name="Shiba K."/>
            <person name="Mottes C."/>
            <person name="Schimmel P."/>
        </authorList>
    </citation>
    <scope>NUCLEOTIDE SEQUENCE [GENOMIC DNA]</scope>
</reference>
<reference key="3">
    <citation type="journal article" date="1991" name="FEBS Lett.">
        <title>Cysteinyl-tRNA synthetase is a direct descendant of the first aminoacyl-tRNA synthetase.</title>
        <authorList>
            <person name="Avalos J."/>
            <person name="Corrochano L.M."/>
            <person name="Brenner S."/>
        </authorList>
    </citation>
    <scope>NUCLEOTIDE SEQUENCE [GENOMIC DNA]</scope>
    <source>
        <strain>K12</strain>
    </source>
</reference>
<reference key="4">
    <citation type="submission" date="1997-01" db="EMBL/GenBank/DDBJ databases">
        <title>Sequence of minutes 4-25 of Escherichia coli.</title>
        <authorList>
            <person name="Chung E."/>
            <person name="Allen E."/>
            <person name="Araujo R."/>
            <person name="Aparicio A.M."/>
            <person name="Davis K."/>
            <person name="Duncan M."/>
            <person name="Federspiel N."/>
            <person name="Hyman R."/>
            <person name="Kalman S."/>
            <person name="Komp C."/>
            <person name="Kurdi O."/>
            <person name="Lew H."/>
            <person name="Lin D."/>
            <person name="Namath A."/>
            <person name="Oefner P."/>
            <person name="Roberts D."/>
            <person name="Schramm S."/>
            <person name="Davis R.W."/>
        </authorList>
    </citation>
    <scope>NUCLEOTIDE SEQUENCE [LARGE SCALE GENOMIC DNA]</scope>
    <source>
        <strain>K12 / MG1655 / ATCC 47076</strain>
    </source>
</reference>
<reference key="5">
    <citation type="journal article" date="1997" name="Science">
        <title>The complete genome sequence of Escherichia coli K-12.</title>
        <authorList>
            <person name="Blattner F.R."/>
            <person name="Plunkett G. III"/>
            <person name="Bloch C.A."/>
            <person name="Perna N.T."/>
            <person name="Burland V."/>
            <person name="Riley M."/>
            <person name="Collado-Vides J."/>
            <person name="Glasner J.D."/>
            <person name="Rode C.K."/>
            <person name="Mayhew G.F."/>
            <person name="Gregor J."/>
            <person name="Davis N.W."/>
            <person name="Kirkpatrick H.A."/>
            <person name="Goeden M.A."/>
            <person name="Rose D.J."/>
            <person name="Mau B."/>
            <person name="Shao Y."/>
        </authorList>
    </citation>
    <scope>NUCLEOTIDE SEQUENCE [LARGE SCALE GENOMIC DNA]</scope>
    <source>
        <strain>K12 / MG1655 / ATCC 47076</strain>
    </source>
</reference>
<reference key="6">
    <citation type="journal article" date="2006" name="Mol. Syst. Biol.">
        <title>Highly accurate genome sequences of Escherichia coli K-12 strains MG1655 and W3110.</title>
        <authorList>
            <person name="Hayashi K."/>
            <person name="Morooka N."/>
            <person name="Yamamoto Y."/>
            <person name="Fujita K."/>
            <person name="Isono K."/>
            <person name="Choi S."/>
            <person name="Ohtsubo E."/>
            <person name="Baba T."/>
            <person name="Wanner B.L."/>
            <person name="Mori H."/>
            <person name="Horiuchi T."/>
        </authorList>
    </citation>
    <scope>NUCLEOTIDE SEQUENCE [LARGE SCALE GENOMIC DNA]</scope>
    <source>
        <strain>K12 / W3110 / ATCC 27325 / DSM 5911</strain>
    </source>
</reference>
<reference key="7">
    <citation type="journal article" date="2003" name="J. Mol. Biol.">
        <title>Zinc-mediated amino acid discrimination in cysteinyl-tRNA synthetase.</title>
        <authorList>
            <person name="Zhang C.M."/>
            <person name="Christian T."/>
            <person name="Newberry K.J."/>
            <person name="Perona J.J."/>
            <person name="Hou Y.M."/>
        </authorList>
    </citation>
    <scope>FUNCTION</scope>
    <scope>CATALYTIC ACTIVITY</scope>
    <scope>BIOPHYSICOCHEMICAL PROPERTIES</scope>
    <scope>COFACTOR</scope>
    <scope>MUTAGENESIS OF CYS-28; TRP-205 AND CYS-209</scope>
</reference>
<reference key="8">
    <citation type="journal article" date="2017" name="Nat. Commun.">
        <title>Cysteinyl-tRNA synthetase governs cysteine polysulfidation and mitochondrial bioenergetics.</title>
        <authorList>
            <person name="Akaike T."/>
            <person name="Ida T."/>
            <person name="Wei F.Y."/>
            <person name="Nishida M."/>
            <person name="Kumagai Y."/>
            <person name="Alam M.M."/>
            <person name="Ihara H."/>
            <person name="Sawa T."/>
            <person name="Matsunaga T."/>
            <person name="Kasamatsu S."/>
            <person name="Nishimura A."/>
            <person name="Morita M."/>
            <person name="Tomizawa K."/>
            <person name="Nishimura A."/>
            <person name="Watanabe S."/>
            <person name="Inaba K."/>
            <person name="Shima H."/>
            <person name="Tanuma N."/>
            <person name="Jung M."/>
            <person name="Fujii S."/>
            <person name="Watanabe Y."/>
            <person name="Ohmuraya M."/>
            <person name="Nagy P."/>
            <person name="Feelisch M."/>
            <person name="Fukuto J.M."/>
            <person name="Motohashi H."/>
        </authorList>
    </citation>
    <scope>FUNCTION</scope>
    <scope>CATALYTIC ACTIVITY</scope>
    <scope>MUTAGENESIS OF CYS-28; 73-LYS--LYS-76; LYS-73; LYS-76; CYS-209; 266-LYS--LYS-269; LYS-266 AND LYS-269</scope>
    <scope>DOMAIN</scope>
</reference>
<reference key="9">
    <citation type="journal article" date="1999" name="Acta Crystallogr. D">
        <title>Crystallization and preliminary diffraction analysis of Escherichia coli cysteinyl-tRNA synthetase.</title>
        <authorList>
            <person name="Newberry K.J."/>
            <person name="Kohn J."/>
            <person name="Hou Y.-M."/>
            <person name="Perona J.J."/>
        </authorList>
    </citation>
    <scope>CRYSTALLIZATION</scope>
</reference>
<reference evidence="8 9" key="10">
    <citation type="journal article" date="2002" name="EMBO J.">
        <title>Structural origins of amino acid selection without editing by cysteinyl-tRNA synthetase.</title>
        <authorList>
            <person name="Newberry K.J."/>
            <person name="Hou Y.-M."/>
            <person name="Perona J.J."/>
        </authorList>
    </citation>
    <scope>X-RAY CRYSTALLOGRAPHY (2.3 ANGSTROMS) IN COMPLEX WITH ZN(2+) AND CYSTEINE</scope>
    <scope>SUBUNIT</scope>
    <scope>COFACTOR</scope>
    <scope>ZINC-BINDING SITES</scope>
</reference>
<reference evidence="10" key="11">
    <citation type="journal article" date="2004" name="Nat. Struct. Mol. Biol.">
        <title>Shape-selective RNA recognition by cysteinyl-tRNA synthetase.</title>
        <authorList>
            <person name="Hauenstein S."/>
            <person name="Zhang C.M."/>
            <person name="Hou Y.M."/>
            <person name="Perona J.J."/>
        </authorList>
    </citation>
    <scope>X-RAY CRYSTALLOGRAPHY (2.30 ANGSTROMS) IN COMPLEX WITH ZN(2+)</scope>
    <scope>COFACTOR</scope>
</reference>
<organism>
    <name type="scientific">Escherichia coli (strain K12)</name>
    <dbReference type="NCBI Taxonomy" id="83333"/>
    <lineage>
        <taxon>Bacteria</taxon>
        <taxon>Pseudomonadati</taxon>
        <taxon>Pseudomonadota</taxon>
        <taxon>Gammaproteobacteria</taxon>
        <taxon>Enterobacterales</taxon>
        <taxon>Enterobacteriaceae</taxon>
        <taxon>Escherichia</taxon>
    </lineage>
</organism>
<sequence length="461" mass="52202">MLKIFNTLTRQKEEFKPIHAGEVGMYVCGITVYDLCHIGHGRTFVAFDVVARYLRFLGYKLKYVRNITDIDDKIIKRANENGESFVAMVDRMIAEMHKDFDALNILRPDMEPRATHHIAEIIELTEQLIAKGHAYVADNGDVMFDVPTDPTYGVLSRQDLDQLQAGARVDVVDDKRNPMDFVLWKMSKEGEPSWPSPWGAGRPGWHIECSAMNCKQLGNHFDIHGGGSDLMFPHHENEIAQSTCAHDGQYVNYWMHSGMVMVDREKMSKSLGNFFTVRDVLKYYDAETVRYFLMSGHYRSQLNYSEENLKQARAALERLYTALRGTDKTVAPAGGEAFEARFIEAMDDDFNTPEAYSVLFDMAREVNRLKAEDMAAANAMASHLRKLSAVLGLLEQEPEAFLQSGAQADDSEVAEIEALIQQRLDARKAKDWAAADAARDRLNEMGIVLEDGPQGTTWRRK</sequence>
<keyword id="KW-0002">3D-structure</keyword>
<keyword id="KW-0030">Aminoacyl-tRNA synthetase</keyword>
<keyword id="KW-0067">ATP-binding</keyword>
<keyword id="KW-0963">Cytoplasm</keyword>
<keyword id="KW-0903">Direct protein sequencing</keyword>
<keyword id="KW-0436">Ligase</keyword>
<keyword id="KW-0479">Metal-binding</keyword>
<keyword id="KW-0547">Nucleotide-binding</keyword>
<keyword id="KW-0648">Protein biosynthesis</keyword>
<keyword id="KW-1185">Reference proteome</keyword>
<keyword id="KW-0862">Zinc</keyword>
<gene>
    <name type="primary">cysS</name>
    <name type="ordered locus">b0526</name>
    <name type="ordered locus">JW0515</name>
</gene>